<comment type="subcellular location">
    <subcellularLocation>
        <location evidence="1">Secreted</location>
    </subcellularLocation>
</comment>
<comment type="tissue specificity">
    <text evidence="3">Expressed exclusively in decidua.</text>
</comment>
<comment type="similarity">
    <text evidence="4">Belongs to the somatotropin/prolactin family.</text>
</comment>
<comment type="sequence caution" evidence="4">
    <conflict type="erroneous initiation">
        <sequence resource="EMBL-CDS" id="CAI24361"/>
    </conflict>
</comment>
<proteinExistence type="evidence at transcript level"/>
<dbReference type="EMBL" id="AB019118">
    <property type="protein sequence ID" value="BAA85988.1"/>
    <property type="molecule type" value="mRNA"/>
</dbReference>
<dbReference type="EMBL" id="AF150740">
    <property type="protein sequence ID" value="AAF13035.1"/>
    <property type="molecule type" value="mRNA"/>
</dbReference>
<dbReference type="EMBL" id="AF234637">
    <property type="protein sequence ID" value="AAF40436.1"/>
    <property type="molecule type" value="mRNA"/>
</dbReference>
<dbReference type="EMBL" id="AL589679">
    <property type="protein sequence ID" value="CAI24360.1"/>
    <property type="molecule type" value="Genomic_DNA"/>
</dbReference>
<dbReference type="EMBL" id="AL589679">
    <property type="protein sequence ID" value="CAI24361.1"/>
    <property type="status" value="ALT_INIT"/>
    <property type="molecule type" value="Genomic_DNA"/>
</dbReference>
<dbReference type="CCDS" id="CCDS26392.1"/>
<dbReference type="RefSeq" id="NP_001156690.1">
    <property type="nucleotide sequence ID" value="NM_001163218.1"/>
</dbReference>
<dbReference type="RefSeq" id="NP_038794.1">
    <property type="nucleotide sequence ID" value="NM_013766.2"/>
</dbReference>
<dbReference type="SMR" id="Q9QUN5"/>
<dbReference type="FunCoup" id="Q9QUN5">
    <property type="interactions" value="32"/>
</dbReference>
<dbReference type="STRING" id="10090.ENSMUSP00000018066"/>
<dbReference type="GlyCosmos" id="Q9QUN5">
    <property type="glycosylation" value="1 site, No reported glycans"/>
</dbReference>
<dbReference type="GlyGen" id="Q9QUN5">
    <property type="glycosylation" value="1 site"/>
</dbReference>
<dbReference type="PhosphoSitePlus" id="Q9QUN5"/>
<dbReference type="PaxDb" id="10090-ENSMUSP00000018066"/>
<dbReference type="DNASU" id="27372"/>
<dbReference type="Ensembl" id="ENSMUST00000018066.13">
    <property type="protein sequence ID" value="ENSMUSP00000018066.7"/>
    <property type="gene ID" value="ENSMUSG00000017922.15"/>
</dbReference>
<dbReference type="GeneID" id="27372"/>
<dbReference type="KEGG" id="mmu:27372"/>
<dbReference type="UCSC" id="uc007pxh.3">
    <property type="organism name" value="mouse"/>
</dbReference>
<dbReference type="AGR" id="MGI:1351649"/>
<dbReference type="CTD" id="27372"/>
<dbReference type="MGI" id="MGI:1351649">
    <property type="gene designation" value="Prl3c1"/>
</dbReference>
<dbReference type="VEuPathDB" id="HostDB:ENSMUSG00000017922"/>
<dbReference type="GeneTree" id="ENSGT00950000182818"/>
<dbReference type="HOGENOM" id="CLU_088274_0_1_1"/>
<dbReference type="InParanoid" id="Q9QUN5"/>
<dbReference type="OrthoDB" id="9606338at2759"/>
<dbReference type="PhylomeDB" id="Q9QUN5"/>
<dbReference type="TreeFam" id="TF332592"/>
<dbReference type="BioGRID-ORCS" id="27372">
    <property type="hits" value="3 hits in 75 CRISPR screens"/>
</dbReference>
<dbReference type="ChiTaRS" id="Prl3a1">
    <property type="organism name" value="mouse"/>
</dbReference>
<dbReference type="PRO" id="PR:Q9QUN5"/>
<dbReference type="Proteomes" id="UP000000589">
    <property type="component" value="Chromosome 13"/>
</dbReference>
<dbReference type="RNAct" id="Q9QUN5">
    <property type="molecule type" value="protein"/>
</dbReference>
<dbReference type="Bgee" id="ENSMUSG00000017922">
    <property type="expression patterns" value="Expressed in gastrula and 13 other cell types or tissues"/>
</dbReference>
<dbReference type="ExpressionAtlas" id="Q9QUN5">
    <property type="expression patterns" value="baseline and differential"/>
</dbReference>
<dbReference type="GO" id="GO:0005576">
    <property type="term" value="C:extracellular region"/>
    <property type="evidence" value="ECO:0007669"/>
    <property type="project" value="UniProtKB-SubCell"/>
</dbReference>
<dbReference type="GO" id="GO:0005179">
    <property type="term" value="F:hormone activity"/>
    <property type="evidence" value="ECO:0007669"/>
    <property type="project" value="UniProtKB-KW"/>
</dbReference>
<dbReference type="CDD" id="cd10288">
    <property type="entry name" value="prolactin_like"/>
    <property type="match status" value="1"/>
</dbReference>
<dbReference type="FunFam" id="1.20.1250.10:FF:000066">
    <property type="entry name" value="Prolactin-3C1"/>
    <property type="match status" value="1"/>
</dbReference>
<dbReference type="Gene3D" id="1.20.1250.10">
    <property type="match status" value="1"/>
</dbReference>
<dbReference type="InterPro" id="IPR009079">
    <property type="entry name" value="4_helix_cytokine-like_core"/>
</dbReference>
<dbReference type="InterPro" id="IPR001400">
    <property type="entry name" value="Somatotropin/Prolactin"/>
</dbReference>
<dbReference type="PANTHER" id="PTHR11417:SF34">
    <property type="entry name" value="PROLACTIN-3C1"/>
    <property type="match status" value="1"/>
</dbReference>
<dbReference type="PANTHER" id="PTHR11417">
    <property type="entry name" value="SOMATOTROPIN,PROLACTIN"/>
    <property type="match status" value="1"/>
</dbReference>
<dbReference type="Pfam" id="PF00103">
    <property type="entry name" value="Hormone_1"/>
    <property type="match status" value="1"/>
</dbReference>
<dbReference type="SUPFAM" id="SSF47266">
    <property type="entry name" value="4-helical cytokines"/>
    <property type="match status" value="1"/>
</dbReference>
<accession>Q9QUN5</accession>
<accession>Q5SZY4</accession>
<sequence length="212" mass="24706">MQLSLTQARTWKGLFLLVSCMFLWVYVTATRYDRKSNEEIYDNLLSSSRHIHRVAKKMYKILDSKLTEGVCFRNKNTKMCQTISTHSVKKNEDLLKVIINVSNFWTYPLKMLIPAVLTHLDSDDGMMTRAVELNYGNKVVLEGAKALLSRIQPGIEENNEPDRWSDLRELRSSKKSKHLLAFCKFFYCLRKDTKMVTCYLRALKHGKIKTIC</sequence>
<feature type="signal peptide" evidence="2">
    <location>
        <begin position="1"/>
        <end position="29"/>
    </location>
</feature>
<feature type="chain" id="PRO_0000045276" description="Prolactin-3C1">
    <location>
        <begin position="30"/>
        <end position="212"/>
    </location>
</feature>
<feature type="glycosylation site" description="N-linked (GlcNAc...) asparagine" evidence="2">
    <location>
        <position position="100"/>
    </location>
</feature>
<feature type="disulfide bond" evidence="1">
    <location>
        <begin position="80"/>
        <end position="188"/>
    </location>
</feature>
<name>PR3C1_MOUSE</name>
<organism>
    <name type="scientific">Mus musculus</name>
    <name type="common">Mouse</name>
    <dbReference type="NCBI Taxonomy" id="10090"/>
    <lineage>
        <taxon>Eukaryota</taxon>
        <taxon>Metazoa</taxon>
        <taxon>Chordata</taxon>
        <taxon>Craniata</taxon>
        <taxon>Vertebrata</taxon>
        <taxon>Euteleostomi</taxon>
        <taxon>Mammalia</taxon>
        <taxon>Eutheria</taxon>
        <taxon>Euarchontoglires</taxon>
        <taxon>Glires</taxon>
        <taxon>Rodentia</taxon>
        <taxon>Myomorpha</taxon>
        <taxon>Muroidea</taxon>
        <taxon>Muridae</taxon>
        <taxon>Murinae</taxon>
        <taxon>Mus</taxon>
        <taxon>Mus</taxon>
    </lineage>
</organism>
<keyword id="KW-1015">Disulfide bond</keyword>
<keyword id="KW-0325">Glycoprotein</keyword>
<keyword id="KW-0372">Hormone</keyword>
<keyword id="KW-1185">Reference proteome</keyword>
<keyword id="KW-0964">Secreted</keyword>
<keyword id="KW-0732">Signal</keyword>
<reference key="1">
    <citation type="journal article" date="1999" name="Biochim. Biophys. Acta">
        <title>PLP-I: a novel prolactin-like gene in rodents.</title>
        <authorList>
            <person name="Hiraoka Y."/>
            <person name="Ogawa M."/>
            <person name="Sakai Y."/>
            <person name="Takeuchi Y."/>
            <person name="Komatsu N."/>
            <person name="Shiozawa M."/>
            <person name="Tanabe K."/>
            <person name="Aiso S."/>
        </authorList>
    </citation>
    <scope>NUCLEOTIDE SEQUENCE [MRNA]</scope>
    <source>
        <strain>BALB/cJ</strain>
    </source>
</reference>
<reference key="2">
    <citation type="journal article" date="1999" name="Endocrinology">
        <title>Prolactin (PRL)-like protein J, a novel member of the PRL/growth hormone family, is exclusively expressed in maternal decidua.</title>
        <authorList>
            <person name="Toft D.J."/>
            <person name="Linzer D.I."/>
        </authorList>
    </citation>
    <scope>NUCLEOTIDE SEQUENCE [MRNA]</scope>
    <scope>TISSUE SPECIFICITY</scope>
</reference>
<reference key="3">
    <citation type="journal article" date="2000" name="J. Endocrinol.">
        <title>Three novel paralogs of the rodent prolactin gene family.</title>
        <authorList>
            <person name="Dai G."/>
            <person name="Wang D."/>
            <person name="Liu B."/>
            <person name="Kasik J.W."/>
            <person name="Mueller H."/>
            <person name="White R.A."/>
            <person name="Hummel G.S."/>
            <person name="Soares M.J."/>
        </authorList>
    </citation>
    <scope>NUCLEOTIDE SEQUENCE [MRNA]</scope>
</reference>
<reference key="4">
    <citation type="journal article" date="2009" name="PLoS Biol.">
        <title>Lineage-specific biology revealed by a finished genome assembly of the mouse.</title>
        <authorList>
            <person name="Church D.M."/>
            <person name="Goodstadt L."/>
            <person name="Hillier L.W."/>
            <person name="Zody M.C."/>
            <person name="Goldstein S."/>
            <person name="She X."/>
            <person name="Bult C.J."/>
            <person name="Agarwala R."/>
            <person name="Cherry J.L."/>
            <person name="DiCuccio M."/>
            <person name="Hlavina W."/>
            <person name="Kapustin Y."/>
            <person name="Meric P."/>
            <person name="Maglott D."/>
            <person name="Birtle Z."/>
            <person name="Marques A.C."/>
            <person name="Graves T."/>
            <person name="Zhou S."/>
            <person name="Teague B."/>
            <person name="Potamousis K."/>
            <person name="Churas C."/>
            <person name="Place M."/>
            <person name="Herschleb J."/>
            <person name="Runnheim R."/>
            <person name="Forrest D."/>
            <person name="Amos-Landgraf J."/>
            <person name="Schwartz D.C."/>
            <person name="Cheng Z."/>
            <person name="Lindblad-Toh K."/>
            <person name="Eichler E.E."/>
            <person name="Ponting C.P."/>
        </authorList>
    </citation>
    <scope>NUCLEOTIDE SEQUENCE [LARGE SCALE GENOMIC DNA]</scope>
    <source>
        <strain>C57BL/6J</strain>
    </source>
</reference>
<evidence type="ECO:0000250" key="1"/>
<evidence type="ECO:0000255" key="2"/>
<evidence type="ECO:0000269" key="3">
    <source>
    </source>
</evidence>
<evidence type="ECO:0000305" key="4"/>
<gene>
    <name type="primary">Prl3c1</name>
    <name type="synonym">Prlpi</name>
    <name type="synonym">Prlpj</name>
</gene>
<protein>
    <recommendedName>
        <fullName>Prolactin-3C1</fullName>
    </recommendedName>
    <alternativeName>
        <fullName>Decidualin</fullName>
    </alternativeName>
    <alternativeName>
        <fullName>Placental prolactin-like protein J</fullName>
        <shortName>PLP-J</shortName>
        <shortName>PRL-like protein J</shortName>
    </alternativeName>
    <alternativeName>
        <fullName>Prolactin-like protein I</fullName>
        <shortName>PLP-I</shortName>
        <shortName>PRL-like protein I</shortName>
    </alternativeName>
</protein>